<feature type="chain" id="PRO_0000310100" description="Probable nicotinate-nucleotide adenylyltransferase">
    <location>
        <begin position="1"/>
        <end position="193"/>
    </location>
</feature>
<sequence length="193" mass="22078">MRIAILGGTYNPVHIGHIFLAKEIEYLLNIDKIIFIPTCNPTHKLIGEGVSVKNRIDMLKLALKNENKMFIDDCDIINGGITYTIDTISCVKKKYKNDKLFLVIGDDLFQNFDSWKDPQSIASSVDLVVAHRIYKERLKSSFKHIYIDNKIIPISSSEIRNRIANGFPVSYLLPFGVLKYIKDNNLYVKKVNV</sequence>
<keyword id="KW-0067">ATP-binding</keyword>
<keyword id="KW-0520">NAD</keyword>
<keyword id="KW-0547">Nucleotide-binding</keyword>
<keyword id="KW-0548">Nucleotidyltransferase</keyword>
<keyword id="KW-0662">Pyridine nucleotide biosynthesis</keyword>
<keyword id="KW-0808">Transferase</keyword>
<comment type="function">
    <text evidence="1">Catalyzes the reversible adenylation of nicotinate mononucleotide (NaMN) to nicotinic acid adenine dinucleotide (NaAD).</text>
</comment>
<comment type="catalytic activity">
    <reaction evidence="1">
        <text>nicotinate beta-D-ribonucleotide + ATP + H(+) = deamido-NAD(+) + diphosphate</text>
        <dbReference type="Rhea" id="RHEA:22860"/>
        <dbReference type="ChEBI" id="CHEBI:15378"/>
        <dbReference type="ChEBI" id="CHEBI:30616"/>
        <dbReference type="ChEBI" id="CHEBI:33019"/>
        <dbReference type="ChEBI" id="CHEBI:57502"/>
        <dbReference type="ChEBI" id="CHEBI:58437"/>
        <dbReference type="EC" id="2.7.7.18"/>
    </reaction>
</comment>
<comment type="pathway">
    <text evidence="1">Cofactor biosynthesis; NAD(+) biosynthesis; deamido-NAD(+) from nicotinate D-ribonucleotide: step 1/1.</text>
</comment>
<comment type="similarity">
    <text evidence="1">Belongs to the NadD family.</text>
</comment>
<dbReference type="EC" id="2.7.7.18" evidence="1"/>
<dbReference type="EMBL" id="CP000395">
    <property type="protein sequence ID" value="ABH02057.1"/>
    <property type="molecule type" value="Genomic_DNA"/>
</dbReference>
<dbReference type="EMBL" id="CP002933">
    <property type="protein sequence ID" value="AEL69998.1"/>
    <property type="molecule type" value="Genomic_DNA"/>
</dbReference>
<dbReference type="RefSeq" id="WP_004789866.1">
    <property type="nucleotide sequence ID" value="NZ_CP160066.1"/>
</dbReference>
<dbReference type="SMR" id="Q0SM71"/>
<dbReference type="STRING" id="29518.BLA32_00315"/>
<dbReference type="GeneID" id="76832324"/>
<dbReference type="KEGG" id="baf:BAPKO_0832"/>
<dbReference type="KEGG" id="bafz:BafPKo_0808"/>
<dbReference type="PATRIC" id="fig|390236.22.peg.771"/>
<dbReference type="eggNOG" id="COG1057">
    <property type="taxonomic scope" value="Bacteria"/>
</dbReference>
<dbReference type="HOGENOM" id="CLU_069765_1_0_12"/>
<dbReference type="OrthoDB" id="5295945at2"/>
<dbReference type="UniPathway" id="UPA00253">
    <property type="reaction ID" value="UER00332"/>
</dbReference>
<dbReference type="Proteomes" id="UP000005216">
    <property type="component" value="Chromosome"/>
</dbReference>
<dbReference type="GO" id="GO:0005524">
    <property type="term" value="F:ATP binding"/>
    <property type="evidence" value="ECO:0007669"/>
    <property type="project" value="UniProtKB-KW"/>
</dbReference>
<dbReference type="GO" id="GO:0004515">
    <property type="term" value="F:nicotinate-nucleotide adenylyltransferase activity"/>
    <property type="evidence" value="ECO:0007669"/>
    <property type="project" value="UniProtKB-UniRule"/>
</dbReference>
<dbReference type="GO" id="GO:0009435">
    <property type="term" value="P:NAD biosynthetic process"/>
    <property type="evidence" value="ECO:0007669"/>
    <property type="project" value="UniProtKB-UniRule"/>
</dbReference>
<dbReference type="CDD" id="cd02165">
    <property type="entry name" value="NMNAT"/>
    <property type="match status" value="1"/>
</dbReference>
<dbReference type="Gene3D" id="3.40.50.620">
    <property type="entry name" value="HUPs"/>
    <property type="match status" value="1"/>
</dbReference>
<dbReference type="HAMAP" id="MF_00244">
    <property type="entry name" value="NaMN_adenylyltr"/>
    <property type="match status" value="1"/>
</dbReference>
<dbReference type="InterPro" id="IPR004821">
    <property type="entry name" value="Cyt_trans-like"/>
</dbReference>
<dbReference type="InterPro" id="IPR005248">
    <property type="entry name" value="NadD/NMNAT"/>
</dbReference>
<dbReference type="InterPro" id="IPR014729">
    <property type="entry name" value="Rossmann-like_a/b/a_fold"/>
</dbReference>
<dbReference type="NCBIfam" id="TIGR00125">
    <property type="entry name" value="cyt_tran_rel"/>
    <property type="match status" value="1"/>
</dbReference>
<dbReference type="NCBIfam" id="TIGR00482">
    <property type="entry name" value="nicotinate (nicotinamide) nucleotide adenylyltransferase"/>
    <property type="match status" value="1"/>
</dbReference>
<dbReference type="NCBIfam" id="NF000840">
    <property type="entry name" value="PRK00071.1-3"/>
    <property type="match status" value="1"/>
</dbReference>
<dbReference type="PANTHER" id="PTHR39321">
    <property type="entry name" value="NICOTINATE-NUCLEOTIDE ADENYLYLTRANSFERASE-RELATED"/>
    <property type="match status" value="1"/>
</dbReference>
<dbReference type="PANTHER" id="PTHR39321:SF3">
    <property type="entry name" value="PHOSPHOPANTETHEINE ADENYLYLTRANSFERASE"/>
    <property type="match status" value="1"/>
</dbReference>
<dbReference type="Pfam" id="PF01467">
    <property type="entry name" value="CTP_transf_like"/>
    <property type="match status" value="1"/>
</dbReference>
<dbReference type="SUPFAM" id="SSF52374">
    <property type="entry name" value="Nucleotidylyl transferase"/>
    <property type="match status" value="1"/>
</dbReference>
<proteinExistence type="inferred from homology"/>
<name>NADD_BORAP</name>
<reference key="1">
    <citation type="journal article" date="2006" name="BMC Genomics">
        <title>Comparative genome analysis: selection pressure on the Borrelia vls cassettes is essential for infectivity.</title>
        <authorList>
            <person name="Gloeckner G."/>
            <person name="Schulte-Spechtel U."/>
            <person name="Schilhabel M."/>
            <person name="Felder M."/>
            <person name="Suehnel J."/>
            <person name="Wilske B."/>
            <person name="Platzer M."/>
        </authorList>
    </citation>
    <scope>NUCLEOTIDE SEQUENCE [LARGE SCALE GENOMIC DNA]</scope>
    <source>
        <strain>PKo</strain>
    </source>
</reference>
<reference key="2">
    <citation type="journal article" date="2011" name="J. Bacteriol.">
        <title>Whole-genome sequences of two Borrelia afzelii and two Borrelia garinii Lyme disease agent isolates.</title>
        <authorList>
            <person name="Casjens S.R."/>
            <person name="Mongodin E.F."/>
            <person name="Qiu W.G."/>
            <person name="Dunn J.J."/>
            <person name="Luft B.J."/>
            <person name="Fraser-Liggett C.M."/>
            <person name="Schutzer S.E."/>
        </authorList>
    </citation>
    <scope>NUCLEOTIDE SEQUENCE [LARGE SCALE GENOMIC DNA]</scope>
    <source>
        <strain>PKo</strain>
    </source>
</reference>
<accession>Q0SM71</accession>
<accession>G0IRW3</accession>
<organism>
    <name type="scientific">Borreliella afzelii (strain PKo)</name>
    <name type="common">Borrelia afzelii</name>
    <dbReference type="NCBI Taxonomy" id="390236"/>
    <lineage>
        <taxon>Bacteria</taxon>
        <taxon>Pseudomonadati</taxon>
        <taxon>Spirochaetota</taxon>
        <taxon>Spirochaetia</taxon>
        <taxon>Spirochaetales</taxon>
        <taxon>Borreliaceae</taxon>
        <taxon>Borreliella</taxon>
    </lineage>
</organism>
<gene>
    <name evidence="1" type="primary">nadD</name>
    <name type="ordered locus">BAPKO_0832</name>
    <name type="ordered locus">BafPKo_0808</name>
</gene>
<evidence type="ECO:0000255" key="1">
    <source>
        <dbReference type="HAMAP-Rule" id="MF_00244"/>
    </source>
</evidence>
<protein>
    <recommendedName>
        <fullName evidence="1">Probable nicotinate-nucleotide adenylyltransferase</fullName>
        <ecNumber evidence="1">2.7.7.18</ecNumber>
    </recommendedName>
    <alternativeName>
        <fullName evidence="1">Deamido-NAD(+) diphosphorylase</fullName>
    </alternativeName>
    <alternativeName>
        <fullName evidence="1">Deamido-NAD(+) pyrophosphorylase</fullName>
    </alternativeName>
    <alternativeName>
        <fullName evidence="1">Nicotinate mononucleotide adenylyltransferase</fullName>
        <shortName evidence="1">NaMN adenylyltransferase</shortName>
    </alternativeName>
</protein>